<feature type="signal peptide" evidence="1">
    <location>
        <begin position="1"/>
        <end position="16"/>
    </location>
</feature>
<feature type="chain" id="PRO_1000215728" description="Membrane-bound lytic murein transglycosylase C">
    <location>
        <begin position="17"/>
        <end position="359"/>
    </location>
</feature>
<feature type="lipid moiety-binding region" description="N-palmitoyl cysteine" evidence="1">
    <location>
        <position position="17"/>
    </location>
</feature>
<feature type="lipid moiety-binding region" description="S-diacylglycerol cysteine" evidence="1">
    <location>
        <position position="17"/>
    </location>
</feature>
<comment type="function">
    <text evidence="1">Murein-degrading enzyme. May play a role in recycling of muropeptides during cell elongation and/or cell division.</text>
</comment>
<comment type="catalytic activity">
    <reaction evidence="1">
        <text>Exolytic cleavage of the (1-&gt;4)-beta-glycosidic linkage between N-acetylmuramic acid (MurNAc) and N-acetylglucosamine (GlcNAc) residues in peptidoglycan, from either the reducing or the non-reducing ends of the peptidoglycan chains, with concomitant formation of a 1,6-anhydrobond in the MurNAc residue.</text>
        <dbReference type="EC" id="4.2.2.n1"/>
    </reaction>
</comment>
<comment type="subcellular location">
    <subcellularLocation>
        <location evidence="1">Cell outer membrane</location>
        <topology evidence="1">Lipid-anchor</topology>
    </subcellularLocation>
</comment>
<comment type="similarity">
    <text evidence="1">Belongs to the transglycosylase Slt family.</text>
</comment>
<proteinExistence type="inferred from homology"/>
<keyword id="KW-0998">Cell outer membrane</keyword>
<keyword id="KW-0961">Cell wall biogenesis/degradation</keyword>
<keyword id="KW-0449">Lipoprotein</keyword>
<keyword id="KW-0456">Lyase</keyword>
<keyword id="KW-0472">Membrane</keyword>
<keyword id="KW-0564">Palmitate</keyword>
<keyword id="KW-0732">Signal</keyword>
<organism>
    <name type="scientific">Escherichia coli (strain K12 / MC4100 / BW2952)</name>
    <dbReference type="NCBI Taxonomy" id="595496"/>
    <lineage>
        <taxon>Bacteria</taxon>
        <taxon>Pseudomonadati</taxon>
        <taxon>Pseudomonadota</taxon>
        <taxon>Gammaproteobacteria</taxon>
        <taxon>Enterobacterales</taxon>
        <taxon>Enterobacteriaceae</taxon>
        <taxon>Escherichia</taxon>
    </lineage>
</organism>
<dbReference type="EC" id="4.2.2.n1" evidence="1"/>
<dbReference type="EMBL" id="CP001396">
    <property type="protein sequence ID" value="ACR63750.1"/>
    <property type="molecule type" value="Genomic_DNA"/>
</dbReference>
<dbReference type="RefSeq" id="WP_000760323.1">
    <property type="nucleotide sequence ID" value="NC_012759.1"/>
</dbReference>
<dbReference type="SMR" id="C5A0N2"/>
<dbReference type="CAZy" id="GH23">
    <property type="family name" value="Glycoside Hydrolase Family 23"/>
</dbReference>
<dbReference type="GeneID" id="86861053"/>
<dbReference type="KEGG" id="ebw:BWG_2685"/>
<dbReference type="HOGENOM" id="CLU_044583_0_0_6"/>
<dbReference type="GO" id="GO:0009279">
    <property type="term" value="C:cell outer membrane"/>
    <property type="evidence" value="ECO:0007669"/>
    <property type="project" value="UniProtKB-SubCell"/>
</dbReference>
<dbReference type="GO" id="GO:0016798">
    <property type="term" value="F:hydrolase activity, acting on glycosyl bonds"/>
    <property type="evidence" value="ECO:0007669"/>
    <property type="project" value="InterPro"/>
</dbReference>
<dbReference type="GO" id="GO:0008933">
    <property type="term" value="F:peptidoglycan lytic transglycosylase activity"/>
    <property type="evidence" value="ECO:0007669"/>
    <property type="project" value="UniProtKB-UniRule"/>
</dbReference>
<dbReference type="GO" id="GO:0016998">
    <property type="term" value="P:cell wall macromolecule catabolic process"/>
    <property type="evidence" value="ECO:0007669"/>
    <property type="project" value="UniProtKB-UniRule"/>
</dbReference>
<dbReference type="GO" id="GO:0071555">
    <property type="term" value="P:cell wall organization"/>
    <property type="evidence" value="ECO:0007669"/>
    <property type="project" value="UniProtKB-KW"/>
</dbReference>
<dbReference type="GO" id="GO:0000270">
    <property type="term" value="P:peptidoglycan metabolic process"/>
    <property type="evidence" value="ECO:0007669"/>
    <property type="project" value="InterPro"/>
</dbReference>
<dbReference type="CDD" id="cd16893">
    <property type="entry name" value="LT_MltC_MltE"/>
    <property type="match status" value="1"/>
</dbReference>
<dbReference type="FunFam" id="1.10.530.10:FF:000002">
    <property type="entry name" value="Membrane-bound lytic murein transglycosylase C"/>
    <property type="match status" value="1"/>
</dbReference>
<dbReference type="Gene3D" id="1.10.530.10">
    <property type="match status" value="1"/>
</dbReference>
<dbReference type="HAMAP" id="MF_01616">
    <property type="entry name" value="MltC"/>
    <property type="match status" value="1"/>
</dbReference>
<dbReference type="InterPro" id="IPR023346">
    <property type="entry name" value="Lysozyme-like_dom_sf"/>
</dbReference>
<dbReference type="InterPro" id="IPR023664">
    <property type="entry name" value="Murein_transglycosylaseC"/>
</dbReference>
<dbReference type="InterPro" id="IPR024570">
    <property type="entry name" value="Murein_transglycosylaseC_N"/>
</dbReference>
<dbReference type="InterPro" id="IPR000189">
    <property type="entry name" value="Transglyc_AS"/>
</dbReference>
<dbReference type="InterPro" id="IPR008258">
    <property type="entry name" value="Transglycosylase_SLT_dom_1"/>
</dbReference>
<dbReference type="NCBIfam" id="NF008670">
    <property type="entry name" value="PRK11671.1"/>
    <property type="match status" value="1"/>
</dbReference>
<dbReference type="PANTHER" id="PTHR37423:SF2">
    <property type="entry name" value="MEMBRANE-BOUND LYTIC MUREIN TRANSGLYCOSYLASE C"/>
    <property type="match status" value="1"/>
</dbReference>
<dbReference type="PANTHER" id="PTHR37423">
    <property type="entry name" value="SOLUBLE LYTIC MUREIN TRANSGLYCOSYLASE-RELATED"/>
    <property type="match status" value="1"/>
</dbReference>
<dbReference type="Pfam" id="PF11873">
    <property type="entry name" value="Mltc_N"/>
    <property type="match status" value="1"/>
</dbReference>
<dbReference type="Pfam" id="PF01464">
    <property type="entry name" value="SLT"/>
    <property type="match status" value="1"/>
</dbReference>
<dbReference type="SUPFAM" id="SSF53955">
    <property type="entry name" value="Lysozyme-like"/>
    <property type="match status" value="1"/>
</dbReference>
<dbReference type="PROSITE" id="PS51257">
    <property type="entry name" value="PROKAR_LIPOPROTEIN"/>
    <property type="match status" value="1"/>
</dbReference>
<dbReference type="PROSITE" id="PS00922">
    <property type="entry name" value="TRANSGLYCOSYLASE"/>
    <property type="match status" value="1"/>
</dbReference>
<protein>
    <recommendedName>
        <fullName evidence="1">Membrane-bound lytic murein transglycosylase C</fullName>
        <ecNumber evidence="1">4.2.2.n1</ecNumber>
    </recommendedName>
    <alternativeName>
        <fullName evidence="1">Murein lyase C</fullName>
    </alternativeName>
</protein>
<evidence type="ECO:0000255" key="1">
    <source>
        <dbReference type="HAMAP-Rule" id="MF_01616"/>
    </source>
</evidence>
<accession>C5A0N2</accession>
<name>MLTC_ECOBW</name>
<gene>
    <name evidence="1" type="primary">mltC</name>
    <name type="ordered locus">BWG_2685</name>
</gene>
<reference key="1">
    <citation type="journal article" date="2009" name="J. Bacteriol.">
        <title>Genomic sequencing reveals regulatory mutations and recombinational events in the widely used MC4100 lineage of Escherichia coli K-12.</title>
        <authorList>
            <person name="Ferenci T."/>
            <person name="Zhou Z."/>
            <person name="Betteridge T."/>
            <person name="Ren Y."/>
            <person name="Liu Y."/>
            <person name="Feng L."/>
            <person name="Reeves P.R."/>
            <person name="Wang L."/>
        </authorList>
    </citation>
    <scope>NUCLEOTIDE SEQUENCE [LARGE SCALE GENOMIC DNA]</scope>
    <source>
        <strain>K12 / MC4100 / BW2952</strain>
    </source>
</reference>
<sequence>MKKYLALALIAPLLISCSTTKKGDTYNEAWVKDTNGFDILMGQFAHNIENIWGFKEVVIAGPKDYVKYTDQYQTRSHINFDDGTITIETIAGTEPAAHLRRAIIKTLLMGDDPSSVDLYSDVDDITISKEPFLYGQVVDNTGQPIRWEGRASNFADYLLKNRLKSRSNGLRIIYSVTINMVPNHLDKRAHKYLGMVRQASRKYGVDESLILAIMQTESSFNPYAVSRSDALGLMQVVQHTAGKDVFRSQGKSGTPSRSFLFDPASNIDTGTAYLAMLNNVYLGGIDNPTSRRYAVITAYNGGAGSVLRVFSNDKIQAANIINTMTPGDVYQTLTTRHPSAESRRYLYKVNTAQKSYRRR</sequence>